<proteinExistence type="inferred from homology"/>
<dbReference type="EC" id="7.3.2.1" evidence="1"/>
<dbReference type="EMBL" id="AL590842">
    <property type="protein sequence ID" value="CAL21445.1"/>
    <property type="molecule type" value="Genomic_DNA"/>
</dbReference>
<dbReference type="EMBL" id="AE009952">
    <property type="protein sequence ID" value="AAM84973.1"/>
    <property type="molecule type" value="Genomic_DNA"/>
</dbReference>
<dbReference type="EMBL" id="AE017042">
    <property type="protein sequence ID" value="AAS62889.1"/>
    <property type="molecule type" value="Genomic_DNA"/>
</dbReference>
<dbReference type="PIR" id="AB0345">
    <property type="entry name" value="AB0345"/>
</dbReference>
<dbReference type="RefSeq" id="YP_002347771.1">
    <property type="nucleotide sequence ID" value="NC_003143.1"/>
</dbReference>
<dbReference type="SMR" id="Q8ZCX5"/>
<dbReference type="STRING" id="214092.YPO2833"/>
<dbReference type="PaxDb" id="214092-YPO2833"/>
<dbReference type="DNASU" id="1146348"/>
<dbReference type="EnsemblBacteria" id="AAS62889">
    <property type="protein sequence ID" value="AAS62889"/>
    <property type="gene ID" value="YP_2700"/>
</dbReference>
<dbReference type="KEGG" id="ype:YPO2833"/>
<dbReference type="KEGG" id="ypk:y1401"/>
<dbReference type="KEGG" id="ypm:YP_2700"/>
<dbReference type="PATRIC" id="fig|214092.21.peg.3277"/>
<dbReference type="eggNOG" id="COG1117">
    <property type="taxonomic scope" value="Bacteria"/>
</dbReference>
<dbReference type="HOGENOM" id="CLU_000604_1_22_6"/>
<dbReference type="OMA" id="AFMYMGD"/>
<dbReference type="OrthoDB" id="9802264at2"/>
<dbReference type="Proteomes" id="UP000000815">
    <property type="component" value="Chromosome"/>
</dbReference>
<dbReference type="Proteomes" id="UP000001019">
    <property type="component" value="Chromosome"/>
</dbReference>
<dbReference type="Proteomes" id="UP000002490">
    <property type="component" value="Chromosome"/>
</dbReference>
<dbReference type="GO" id="GO:0005886">
    <property type="term" value="C:plasma membrane"/>
    <property type="evidence" value="ECO:0007669"/>
    <property type="project" value="UniProtKB-SubCell"/>
</dbReference>
<dbReference type="GO" id="GO:0005524">
    <property type="term" value="F:ATP binding"/>
    <property type="evidence" value="ECO:0007669"/>
    <property type="project" value="UniProtKB-KW"/>
</dbReference>
<dbReference type="GO" id="GO:0016887">
    <property type="term" value="F:ATP hydrolysis activity"/>
    <property type="evidence" value="ECO:0007669"/>
    <property type="project" value="InterPro"/>
</dbReference>
<dbReference type="GO" id="GO:0015415">
    <property type="term" value="F:ATPase-coupled phosphate ion transmembrane transporter activity"/>
    <property type="evidence" value="ECO:0007669"/>
    <property type="project" value="UniProtKB-EC"/>
</dbReference>
<dbReference type="GO" id="GO:0035435">
    <property type="term" value="P:phosphate ion transmembrane transport"/>
    <property type="evidence" value="ECO:0007669"/>
    <property type="project" value="InterPro"/>
</dbReference>
<dbReference type="CDD" id="cd03260">
    <property type="entry name" value="ABC_PstB_phosphate_transporter"/>
    <property type="match status" value="1"/>
</dbReference>
<dbReference type="FunFam" id="3.40.50.300:FF:000132">
    <property type="entry name" value="Phosphate import ATP-binding protein PstB"/>
    <property type="match status" value="1"/>
</dbReference>
<dbReference type="Gene3D" id="3.40.50.300">
    <property type="entry name" value="P-loop containing nucleotide triphosphate hydrolases"/>
    <property type="match status" value="1"/>
</dbReference>
<dbReference type="InterPro" id="IPR003593">
    <property type="entry name" value="AAA+_ATPase"/>
</dbReference>
<dbReference type="InterPro" id="IPR003439">
    <property type="entry name" value="ABC_transporter-like_ATP-bd"/>
</dbReference>
<dbReference type="InterPro" id="IPR017871">
    <property type="entry name" value="ABC_transporter-like_CS"/>
</dbReference>
<dbReference type="InterPro" id="IPR027417">
    <property type="entry name" value="P-loop_NTPase"/>
</dbReference>
<dbReference type="InterPro" id="IPR005670">
    <property type="entry name" value="PstB-like"/>
</dbReference>
<dbReference type="NCBIfam" id="TIGR00972">
    <property type="entry name" value="3a0107s01c2"/>
    <property type="match status" value="1"/>
</dbReference>
<dbReference type="PANTHER" id="PTHR43423">
    <property type="entry name" value="ABC TRANSPORTER I FAMILY MEMBER 17"/>
    <property type="match status" value="1"/>
</dbReference>
<dbReference type="PANTHER" id="PTHR43423:SF12">
    <property type="entry name" value="IRON EXPORT ATP-BINDING PROTEIN FETA-RELATED"/>
    <property type="match status" value="1"/>
</dbReference>
<dbReference type="Pfam" id="PF00005">
    <property type="entry name" value="ABC_tran"/>
    <property type="match status" value="1"/>
</dbReference>
<dbReference type="SMART" id="SM00382">
    <property type="entry name" value="AAA"/>
    <property type="match status" value="1"/>
</dbReference>
<dbReference type="SUPFAM" id="SSF52540">
    <property type="entry name" value="P-loop containing nucleoside triphosphate hydrolases"/>
    <property type="match status" value="1"/>
</dbReference>
<dbReference type="PROSITE" id="PS00211">
    <property type="entry name" value="ABC_TRANSPORTER_1"/>
    <property type="match status" value="1"/>
</dbReference>
<dbReference type="PROSITE" id="PS50893">
    <property type="entry name" value="ABC_TRANSPORTER_2"/>
    <property type="match status" value="1"/>
</dbReference>
<dbReference type="PROSITE" id="PS51238">
    <property type="entry name" value="PSTB"/>
    <property type="match status" value="1"/>
</dbReference>
<comment type="function">
    <text evidence="1">Part of the ABC transporter complex PstSACB involved in phosphate import. Responsible for energy coupling to the transport system.</text>
</comment>
<comment type="catalytic activity">
    <reaction evidence="1">
        <text>phosphate(out) + ATP + H2O = ADP + 2 phosphate(in) + H(+)</text>
        <dbReference type="Rhea" id="RHEA:24440"/>
        <dbReference type="ChEBI" id="CHEBI:15377"/>
        <dbReference type="ChEBI" id="CHEBI:15378"/>
        <dbReference type="ChEBI" id="CHEBI:30616"/>
        <dbReference type="ChEBI" id="CHEBI:43474"/>
        <dbReference type="ChEBI" id="CHEBI:456216"/>
        <dbReference type="EC" id="7.3.2.1"/>
    </reaction>
</comment>
<comment type="subunit">
    <text evidence="1">The complex is composed of two ATP-binding proteins (PstB), two transmembrane proteins (PstC and PstA) and a solute-binding protein (PstS).</text>
</comment>
<comment type="subcellular location">
    <subcellularLocation>
        <location evidence="1">Cell inner membrane</location>
        <topology evidence="1">Peripheral membrane protein</topology>
    </subcellularLocation>
</comment>
<comment type="similarity">
    <text evidence="1">Belongs to the ABC transporter superfamily. Phosphate importer (TC 3.A.1.7) family.</text>
</comment>
<evidence type="ECO:0000255" key="1">
    <source>
        <dbReference type="HAMAP-Rule" id="MF_01702"/>
    </source>
</evidence>
<sequence>MGLLTPNSLPLLDVQHLTDEQTALAVERLNLFYGDKQVLHDISFCVPKHRVTALIGPSGCGKSTLLRCFNRMNDLLDNCHFDGEIRLGDEIITDKTTDVAALRRRVGMVFQRPNPFPKSIYENVVYGLRLQGVRDRRVLDEAVERSLRAAALWHEVKDRLRENAFRLSSGQQQRLVIARAIAIEPEVLLLDEPTSALDPISTLTIEELITTLKQQYTVVLVTHNMQQAARVSDYTAFIHQGRLVEYNNTDALFTSPYQRQTEDYITGRYG</sequence>
<organism>
    <name type="scientific">Yersinia pestis</name>
    <dbReference type="NCBI Taxonomy" id="632"/>
    <lineage>
        <taxon>Bacteria</taxon>
        <taxon>Pseudomonadati</taxon>
        <taxon>Pseudomonadota</taxon>
        <taxon>Gammaproteobacteria</taxon>
        <taxon>Enterobacterales</taxon>
        <taxon>Yersiniaceae</taxon>
        <taxon>Yersinia</taxon>
    </lineage>
</organism>
<protein>
    <recommendedName>
        <fullName evidence="1">Phosphate import ATP-binding protein PstB 1</fullName>
        <ecNumber evidence="1">7.3.2.1</ecNumber>
    </recommendedName>
    <alternativeName>
        <fullName evidence="1">ABC phosphate transporter 1</fullName>
    </alternativeName>
    <alternativeName>
        <fullName>Phosphate-specific transport component 1</fullName>
    </alternativeName>
    <alternativeName>
        <fullName evidence="1">Phosphate-transporting ATPase 1</fullName>
    </alternativeName>
</protein>
<name>PSTB1_YERPE</name>
<feature type="chain" id="PRO_0000092937" description="Phosphate import ATP-binding protein PstB 1">
    <location>
        <begin position="1"/>
        <end position="270"/>
    </location>
</feature>
<feature type="domain" description="ABC transporter" evidence="1">
    <location>
        <begin position="24"/>
        <end position="265"/>
    </location>
</feature>
<feature type="binding site" evidence="1">
    <location>
        <begin position="56"/>
        <end position="63"/>
    </location>
    <ligand>
        <name>ATP</name>
        <dbReference type="ChEBI" id="CHEBI:30616"/>
    </ligand>
</feature>
<reference key="1">
    <citation type="journal article" date="2001" name="Nature">
        <title>Genome sequence of Yersinia pestis, the causative agent of plague.</title>
        <authorList>
            <person name="Parkhill J."/>
            <person name="Wren B.W."/>
            <person name="Thomson N.R."/>
            <person name="Titball R.W."/>
            <person name="Holden M.T.G."/>
            <person name="Prentice M.B."/>
            <person name="Sebaihia M."/>
            <person name="James K.D."/>
            <person name="Churcher C.M."/>
            <person name="Mungall K.L."/>
            <person name="Baker S."/>
            <person name="Basham D."/>
            <person name="Bentley S.D."/>
            <person name="Brooks K."/>
            <person name="Cerdeno-Tarraga A.-M."/>
            <person name="Chillingworth T."/>
            <person name="Cronin A."/>
            <person name="Davies R.M."/>
            <person name="Davis P."/>
            <person name="Dougan G."/>
            <person name="Feltwell T."/>
            <person name="Hamlin N."/>
            <person name="Holroyd S."/>
            <person name="Jagels K."/>
            <person name="Karlyshev A.V."/>
            <person name="Leather S."/>
            <person name="Moule S."/>
            <person name="Oyston P.C.F."/>
            <person name="Quail M.A."/>
            <person name="Rutherford K.M."/>
            <person name="Simmonds M."/>
            <person name="Skelton J."/>
            <person name="Stevens K."/>
            <person name="Whitehead S."/>
            <person name="Barrell B.G."/>
        </authorList>
    </citation>
    <scope>NUCLEOTIDE SEQUENCE [LARGE SCALE GENOMIC DNA]</scope>
    <source>
        <strain>CO-92 / Biovar Orientalis</strain>
    </source>
</reference>
<reference key="2">
    <citation type="journal article" date="2002" name="J. Bacteriol.">
        <title>Genome sequence of Yersinia pestis KIM.</title>
        <authorList>
            <person name="Deng W."/>
            <person name="Burland V."/>
            <person name="Plunkett G. III"/>
            <person name="Boutin A."/>
            <person name="Mayhew G.F."/>
            <person name="Liss P."/>
            <person name="Perna N.T."/>
            <person name="Rose D.J."/>
            <person name="Mau B."/>
            <person name="Zhou S."/>
            <person name="Schwartz D.C."/>
            <person name="Fetherston J.D."/>
            <person name="Lindler L.E."/>
            <person name="Brubaker R.R."/>
            <person name="Plano G.V."/>
            <person name="Straley S.C."/>
            <person name="McDonough K.A."/>
            <person name="Nilles M.L."/>
            <person name="Matson J.S."/>
            <person name="Blattner F.R."/>
            <person name="Perry R.D."/>
        </authorList>
    </citation>
    <scope>NUCLEOTIDE SEQUENCE [LARGE SCALE GENOMIC DNA]</scope>
    <source>
        <strain>KIM10+ / Biovar Mediaevalis</strain>
    </source>
</reference>
<reference key="3">
    <citation type="journal article" date="2004" name="DNA Res.">
        <title>Complete genome sequence of Yersinia pestis strain 91001, an isolate avirulent to humans.</title>
        <authorList>
            <person name="Song Y."/>
            <person name="Tong Z."/>
            <person name="Wang J."/>
            <person name="Wang L."/>
            <person name="Guo Z."/>
            <person name="Han Y."/>
            <person name="Zhang J."/>
            <person name="Pei D."/>
            <person name="Zhou D."/>
            <person name="Qin H."/>
            <person name="Pang X."/>
            <person name="Han Y."/>
            <person name="Zhai J."/>
            <person name="Li M."/>
            <person name="Cui B."/>
            <person name="Qi Z."/>
            <person name="Jin L."/>
            <person name="Dai R."/>
            <person name="Chen F."/>
            <person name="Li S."/>
            <person name="Ye C."/>
            <person name="Du Z."/>
            <person name="Lin W."/>
            <person name="Wang J."/>
            <person name="Yu J."/>
            <person name="Yang H."/>
            <person name="Wang J."/>
            <person name="Huang P."/>
            <person name="Yang R."/>
        </authorList>
    </citation>
    <scope>NUCLEOTIDE SEQUENCE [LARGE SCALE GENOMIC DNA]</scope>
    <source>
        <strain>91001 / Biovar Mediaevalis</strain>
    </source>
</reference>
<keyword id="KW-0067">ATP-binding</keyword>
<keyword id="KW-0997">Cell inner membrane</keyword>
<keyword id="KW-1003">Cell membrane</keyword>
<keyword id="KW-0472">Membrane</keyword>
<keyword id="KW-0547">Nucleotide-binding</keyword>
<keyword id="KW-0592">Phosphate transport</keyword>
<keyword id="KW-1185">Reference proteome</keyword>
<keyword id="KW-1278">Translocase</keyword>
<keyword id="KW-0813">Transport</keyword>
<gene>
    <name evidence="1" type="primary">pstB1</name>
    <name type="ordered locus">YPO2833</name>
    <name type="ordered locus">y1401</name>
    <name type="ordered locus">YP_2700</name>
</gene>
<accession>Q8ZCX5</accession>
<accession>Q0WD67</accession>